<organism>
    <name type="scientific">Candida glabrata (strain ATCC 2001 / BCRC 20586 / JCM 3761 / NBRC 0622 / NRRL Y-65 / CBS 138)</name>
    <name type="common">Yeast</name>
    <name type="synonym">Nakaseomyces glabratus</name>
    <dbReference type="NCBI Taxonomy" id="284593"/>
    <lineage>
        <taxon>Eukaryota</taxon>
        <taxon>Fungi</taxon>
        <taxon>Dikarya</taxon>
        <taxon>Ascomycota</taxon>
        <taxon>Saccharomycotina</taxon>
        <taxon>Saccharomycetes</taxon>
        <taxon>Saccharomycetales</taxon>
        <taxon>Saccharomycetaceae</taxon>
        <taxon>Nakaseomyces</taxon>
    </lineage>
</organism>
<proteinExistence type="inferred from homology"/>
<evidence type="ECO:0000255" key="1">
    <source>
        <dbReference type="HAMAP-Rule" id="MF_03140"/>
    </source>
</evidence>
<accession>Q6FM28</accession>
<keyword id="KW-0227">DNA damage</keyword>
<keyword id="KW-0234">DNA repair</keyword>
<keyword id="KW-0235">DNA replication</keyword>
<keyword id="KW-0255">Endonuclease</keyword>
<keyword id="KW-0269">Exonuclease</keyword>
<keyword id="KW-0378">Hydrolase</keyword>
<keyword id="KW-0460">Magnesium</keyword>
<keyword id="KW-0479">Metal-binding</keyword>
<keyword id="KW-0496">Mitochondrion</keyword>
<keyword id="KW-0540">Nuclease</keyword>
<keyword id="KW-0539">Nucleus</keyword>
<keyword id="KW-0597">Phosphoprotein</keyword>
<keyword id="KW-1185">Reference proteome</keyword>
<gene>
    <name evidence="1" type="primary">FEN1</name>
    <name type="ordered locus">CAGL0K11506g</name>
</gene>
<reference key="1">
    <citation type="journal article" date="2004" name="Nature">
        <title>Genome evolution in yeasts.</title>
        <authorList>
            <person name="Dujon B."/>
            <person name="Sherman D."/>
            <person name="Fischer G."/>
            <person name="Durrens P."/>
            <person name="Casaregola S."/>
            <person name="Lafontaine I."/>
            <person name="de Montigny J."/>
            <person name="Marck C."/>
            <person name="Neuveglise C."/>
            <person name="Talla E."/>
            <person name="Goffard N."/>
            <person name="Frangeul L."/>
            <person name="Aigle M."/>
            <person name="Anthouard V."/>
            <person name="Babour A."/>
            <person name="Barbe V."/>
            <person name="Barnay S."/>
            <person name="Blanchin S."/>
            <person name="Beckerich J.-M."/>
            <person name="Beyne E."/>
            <person name="Bleykasten C."/>
            <person name="Boisrame A."/>
            <person name="Boyer J."/>
            <person name="Cattolico L."/>
            <person name="Confanioleri F."/>
            <person name="de Daruvar A."/>
            <person name="Despons L."/>
            <person name="Fabre E."/>
            <person name="Fairhead C."/>
            <person name="Ferry-Dumazet H."/>
            <person name="Groppi A."/>
            <person name="Hantraye F."/>
            <person name="Hennequin C."/>
            <person name="Jauniaux N."/>
            <person name="Joyet P."/>
            <person name="Kachouri R."/>
            <person name="Kerrest A."/>
            <person name="Koszul R."/>
            <person name="Lemaire M."/>
            <person name="Lesur I."/>
            <person name="Ma L."/>
            <person name="Muller H."/>
            <person name="Nicaud J.-M."/>
            <person name="Nikolski M."/>
            <person name="Oztas S."/>
            <person name="Ozier-Kalogeropoulos O."/>
            <person name="Pellenz S."/>
            <person name="Potier S."/>
            <person name="Richard G.-F."/>
            <person name="Straub M.-L."/>
            <person name="Suleau A."/>
            <person name="Swennen D."/>
            <person name="Tekaia F."/>
            <person name="Wesolowski-Louvel M."/>
            <person name="Westhof E."/>
            <person name="Wirth B."/>
            <person name="Zeniou-Meyer M."/>
            <person name="Zivanovic Y."/>
            <person name="Bolotin-Fukuhara M."/>
            <person name="Thierry A."/>
            <person name="Bouchier C."/>
            <person name="Caudron B."/>
            <person name="Scarpelli C."/>
            <person name="Gaillardin C."/>
            <person name="Weissenbach J."/>
            <person name="Wincker P."/>
            <person name="Souciet J.-L."/>
        </authorList>
    </citation>
    <scope>NUCLEOTIDE SEQUENCE [LARGE SCALE GENOMIC DNA]</scope>
    <source>
        <strain>ATCC 2001 / BCRC 20586 / JCM 3761 / NBRC 0622 / NRRL Y-65 / CBS 138</strain>
    </source>
</reference>
<feature type="chain" id="PRO_0000403569" description="Flap endonuclease 1">
    <location>
        <begin position="1"/>
        <end position="381"/>
    </location>
</feature>
<feature type="region of interest" description="N-domain">
    <location>
        <begin position="1"/>
        <end position="105"/>
    </location>
</feature>
<feature type="region of interest" description="I-domain">
    <location>
        <begin position="120"/>
        <end position="251"/>
    </location>
</feature>
<feature type="region of interest" description="Interaction with PCNA" evidence="1">
    <location>
        <begin position="338"/>
        <end position="346"/>
    </location>
</feature>
<feature type="binding site" evidence="1">
    <location>
        <position position="34"/>
    </location>
    <ligand>
        <name>Mg(2+)</name>
        <dbReference type="ChEBI" id="CHEBI:18420"/>
        <label>1</label>
    </ligand>
</feature>
<feature type="binding site" evidence="1">
    <location>
        <position position="47"/>
    </location>
    <ligand>
        <name>DNA</name>
        <dbReference type="ChEBI" id="CHEBI:16991"/>
    </ligand>
</feature>
<feature type="binding site" evidence="1">
    <location>
        <position position="71"/>
    </location>
    <ligand>
        <name>DNA</name>
        <dbReference type="ChEBI" id="CHEBI:16991"/>
    </ligand>
</feature>
<feature type="binding site" evidence="1">
    <location>
        <position position="87"/>
    </location>
    <ligand>
        <name>Mg(2+)</name>
        <dbReference type="ChEBI" id="CHEBI:18420"/>
        <label>1</label>
    </ligand>
</feature>
<feature type="binding site" evidence="1">
    <location>
        <position position="156"/>
    </location>
    <ligand>
        <name>DNA</name>
        <dbReference type="ChEBI" id="CHEBI:16991"/>
    </ligand>
</feature>
<feature type="binding site" evidence="1">
    <location>
        <position position="156"/>
    </location>
    <ligand>
        <name>Mg(2+)</name>
        <dbReference type="ChEBI" id="CHEBI:18420"/>
        <label>1</label>
    </ligand>
</feature>
<feature type="binding site" evidence="1">
    <location>
        <position position="158"/>
    </location>
    <ligand>
        <name>Mg(2+)</name>
        <dbReference type="ChEBI" id="CHEBI:18420"/>
        <label>1</label>
    </ligand>
</feature>
<feature type="binding site" evidence="1">
    <location>
        <position position="177"/>
    </location>
    <ligand>
        <name>Mg(2+)</name>
        <dbReference type="ChEBI" id="CHEBI:18420"/>
        <label>2</label>
    </ligand>
</feature>
<feature type="binding site" evidence="1">
    <location>
        <position position="179"/>
    </location>
    <ligand>
        <name>Mg(2+)</name>
        <dbReference type="ChEBI" id="CHEBI:18420"/>
        <label>2</label>
    </ligand>
</feature>
<feature type="binding site" evidence="1">
    <location>
        <position position="229"/>
    </location>
    <ligand>
        <name>DNA</name>
        <dbReference type="ChEBI" id="CHEBI:16991"/>
    </ligand>
</feature>
<feature type="binding site" evidence="1">
    <location>
        <position position="231"/>
    </location>
    <ligand>
        <name>DNA</name>
        <dbReference type="ChEBI" id="CHEBI:16991"/>
    </ligand>
</feature>
<feature type="binding site" evidence="1">
    <location>
        <position position="231"/>
    </location>
    <ligand>
        <name>Mg(2+)</name>
        <dbReference type="ChEBI" id="CHEBI:18420"/>
        <label>2</label>
    </ligand>
</feature>
<name>FEN1_CANGA</name>
<protein>
    <recommendedName>
        <fullName evidence="1">Flap endonuclease 1</fullName>
        <shortName evidence="1">FEN-1</shortName>
        <ecNumber evidence="1">3.1.-.-</ecNumber>
    </recommendedName>
    <alternativeName>
        <fullName evidence="1">Flap structure-specific endonuclease 1</fullName>
    </alternativeName>
</protein>
<comment type="function">
    <text evidence="1">Structure-specific nuclease with 5'-flap endonuclease and 5'-3' exonuclease activities involved in DNA replication and repair. During DNA replication, cleaves the 5'-overhanging flap structure that is generated by displacement synthesis when DNA polymerase encounters the 5'-end of a downstream Okazaki fragment. It enters the flap from the 5'-end and then tracks to cleave the flap base, leaving a nick for ligation. Also involved in the long patch base excision repair (LP-BER) pathway, by cleaving within the apurinic/apyrimidinic (AP) site-terminated flap. Acts as a genome stabilization factor that prevents flaps from equilibrating into structures that lead to duplications and deletions. Also possesses 5'-3' exonuclease activity on nicked or gapped double-stranded DNA, and exhibits RNase H activity. Also involved in replication and repair of rDNA and in repairing mitochondrial DNA.</text>
</comment>
<comment type="cofactor">
    <cofactor evidence="1">
        <name>Mg(2+)</name>
        <dbReference type="ChEBI" id="CHEBI:18420"/>
    </cofactor>
    <text evidence="1">Binds 2 magnesium ions per subunit. They probably participate in the reaction catalyzed by the enzyme. May bind an additional third magnesium ion after substrate binding.</text>
</comment>
<comment type="subunit">
    <text evidence="1">Interacts with PCNA. Three molecules of FEN1 bind to one PCNA trimer with each molecule binding to one PCNA monomer. PCNA stimulates the nuclease activity without altering cleavage specificity.</text>
</comment>
<comment type="subcellular location">
    <subcellularLocation>
        <location evidence="1">Nucleus</location>
        <location evidence="1">Nucleolus</location>
    </subcellularLocation>
    <subcellularLocation>
        <location evidence="1">Nucleus</location>
        <location evidence="1">Nucleoplasm</location>
    </subcellularLocation>
    <subcellularLocation>
        <location evidence="1">Mitochondrion</location>
    </subcellularLocation>
    <text evidence="1">Resides mostly in the nucleoli and relocalizes to the nucleoplasm upon DNA damage.</text>
</comment>
<comment type="PTM">
    <text evidence="1">Phosphorylated. Phosphorylation upon DNA damage induces relocalization to the nuclear plasma.</text>
</comment>
<comment type="similarity">
    <text evidence="1">Belongs to the XPG/RAD2 endonuclease family. FEN1 subfamily.</text>
</comment>
<sequence>MGIKGLNSIITEHVPSAIRKSDIKAFFGRKVAIDASMSLYQFLIAVRQQDGGQLSTETGETTSHLMGMFYRTLRMIDNGIKPCYVFDGKPPVLKSHELDKRTSRREETEKKLAEATEEAEKMKHERRLVKVSKEHNDEAKKLLELMGIPYVNAPGEAEAQCAELAKKGKVYAAASEDMDTLCYRTPYLLRHLTFSEARKEPIHEINTEIVLQGLELTIDQFIDLGIMLGCDYCDSIKGVGPVTALKLMKEHGSLEKIVEYIESGEANNKWKVPENWPYKEARELFVKPDVIDANEIDLKWTPPKEDELIQYLCHEKKFSEERVRSGIKRLQKGLKSGVQGRLDGFFKVVPKTKEQLEAAAAKAKLAKKNAKGAKGKVTKRR</sequence>
<dbReference type="EC" id="3.1.-.-" evidence="1"/>
<dbReference type="EMBL" id="CR380957">
    <property type="protein sequence ID" value="CAG61679.1"/>
    <property type="molecule type" value="Genomic_DNA"/>
</dbReference>
<dbReference type="RefSeq" id="XP_448716.1">
    <property type="nucleotide sequence ID" value="XM_448716.1"/>
</dbReference>
<dbReference type="SMR" id="Q6FM28"/>
<dbReference type="FunCoup" id="Q6FM28">
    <property type="interactions" value="1126"/>
</dbReference>
<dbReference type="STRING" id="284593.Q6FM28"/>
<dbReference type="EnsemblFungi" id="CAGL0K11506g-T">
    <property type="protein sequence ID" value="CAGL0K11506g-T-p1"/>
    <property type="gene ID" value="CAGL0K11506g"/>
</dbReference>
<dbReference type="KEGG" id="cgr:2890519"/>
<dbReference type="CGD" id="CAL0133801">
    <property type="gene designation" value="CAGL0K11506g"/>
</dbReference>
<dbReference type="VEuPathDB" id="FungiDB:B1J91_K11506g"/>
<dbReference type="VEuPathDB" id="FungiDB:CAGL0K11506g"/>
<dbReference type="eggNOG" id="KOG2519">
    <property type="taxonomic scope" value="Eukaryota"/>
</dbReference>
<dbReference type="HOGENOM" id="CLU_032444_2_0_1"/>
<dbReference type="InParanoid" id="Q6FM28"/>
<dbReference type="OMA" id="MGIPWVQ"/>
<dbReference type="Proteomes" id="UP000002428">
    <property type="component" value="Chromosome K"/>
</dbReference>
<dbReference type="GO" id="GO:0005829">
    <property type="term" value="C:cytosol"/>
    <property type="evidence" value="ECO:0007669"/>
    <property type="project" value="EnsemblFungi"/>
</dbReference>
<dbReference type="GO" id="GO:0005739">
    <property type="term" value="C:mitochondrion"/>
    <property type="evidence" value="ECO:0007669"/>
    <property type="project" value="UniProtKB-SubCell"/>
</dbReference>
<dbReference type="GO" id="GO:0005730">
    <property type="term" value="C:nucleolus"/>
    <property type="evidence" value="ECO:0007669"/>
    <property type="project" value="UniProtKB-SubCell"/>
</dbReference>
<dbReference type="GO" id="GO:0005654">
    <property type="term" value="C:nucleoplasm"/>
    <property type="evidence" value="ECO:0007669"/>
    <property type="project" value="UniProtKB-SubCell"/>
</dbReference>
<dbReference type="GO" id="GO:0008409">
    <property type="term" value="F:5'-3' exonuclease activity"/>
    <property type="evidence" value="ECO:0007669"/>
    <property type="project" value="UniProtKB-UniRule"/>
</dbReference>
<dbReference type="GO" id="GO:0017108">
    <property type="term" value="F:5'-flap endonuclease activity"/>
    <property type="evidence" value="ECO:0007669"/>
    <property type="project" value="UniProtKB-UniRule"/>
</dbReference>
<dbReference type="GO" id="GO:0003677">
    <property type="term" value="F:DNA binding"/>
    <property type="evidence" value="ECO:0007669"/>
    <property type="project" value="UniProtKB-UniRule"/>
</dbReference>
<dbReference type="GO" id="GO:0000287">
    <property type="term" value="F:magnesium ion binding"/>
    <property type="evidence" value="ECO:0007669"/>
    <property type="project" value="UniProtKB-UniRule"/>
</dbReference>
<dbReference type="GO" id="GO:0006284">
    <property type="term" value="P:base-excision repair"/>
    <property type="evidence" value="ECO:0007669"/>
    <property type="project" value="UniProtKB-UniRule"/>
</dbReference>
<dbReference type="GO" id="GO:0043137">
    <property type="term" value="P:DNA replication, removal of RNA primer"/>
    <property type="evidence" value="ECO:0007669"/>
    <property type="project" value="UniProtKB-UniRule"/>
</dbReference>
<dbReference type="GO" id="GO:0006303">
    <property type="term" value="P:double-strand break repair via nonhomologous end joining"/>
    <property type="evidence" value="ECO:0007669"/>
    <property type="project" value="EnsemblFungi"/>
</dbReference>
<dbReference type="GO" id="GO:0007534">
    <property type="term" value="P:gene conversion at mating-type locus"/>
    <property type="evidence" value="ECO:0007669"/>
    <property type="project" value="EnsemblFungi"/>
</dbReference>
<dbReference type="GO" id="GO:0035753">
    <property type="term" value="P:maintenance of DNA trinucleotide repeats"/>
    <property type="evidence" value="ECO:0007669"/>
    <property type="project" value="EnsemblFungi"/>
</dbReference>
<dbReference type="CDD" id="cd09907">
    <property type="entry name" value="H3TH_FEN1-Euk"/>
    <property type="match status" value="1"/>
</dbReference>
<dbReference type="CDD" id="cd09867">
    <property type="entry name" value="PIN_FEN1"/>
    <property type="match status" value="1"/>
</dbReference>
<dbReference type="FunFam" id="1.10.150.20:FF:000009">
    <property type="entry name" value="Flap endonuclease 1"/>
    <property type="match status" value="1"/>
</dbReference>
<dbReference type="FunFam" id="3.40.50.1010:FF:000003">
    <property type="entry name" value="Flap endonuclease 1"/>
    <property type="match status" value="1"/>
</dbReference>
<dbReference type="Gene3D" id="1.10.150.20">
    <property type="entry name" value="5' to 3' exonuclease, C-terminal subdomain"/>
    <property type="match status" value="1"/>
</dbReference>
<dbReference type="Gene3D" id="3.40.50.1010">
    <property type="entry name" value="5'-nuclease"/>
    <property type="match status" value="1"/>
</dbReference>
<dbReference type="HAMAP" id="MF_00614">
    <property type="entry name" value="Fen"/>
    <property type="match status" value="1"/>
</dbReference>
<dbReference type="InterPro" id="IPR036279">
    <property type="entry name" value="5-3_exonuclease_C_sf"/>
</dbReference>
<dbReference type="InterPro" id="IPR023426">
    <property type="entry name" value="Flap_endonuc"/>
</dbReference>
<dbReference type="InterPro" id="IPR008918">
    <property type="entry name" value="HhH2"/>
</dbReference>
<dbReference type="InterPro" id="IPR029060">
    <property type="entry name" value="PIN-like_dom_sf"/>
</dbReference>
<dbReference type="InterPro" id="IPR006086">
    <property type="entry name" value="XPG-I_dom"/>
</dbReference>
<dbReference type="InterPro" id="IPR006084">
    <property type="entry name" value="XPG/Rad2"/>
</dbReference>
<dbReference type="InterPro" id="IPR019974">
    <property type="entry name" value="XPG_CS"/>
</dbReference>
<dbReference type="InterPro" id="IPR006085">
    <property type="entry name" value="XPG_DNA_repair_N"/>
</dbReference>
<dbReference type="PANTHER" id="PTHR11081:SF9">
    <property type="entry name" value="FLAP ENDONUCLEASE 1"/>
    <property type="match status" value="1"/>
</dbReference>
<dbReference type="PANTHER" id="PTHR11081">
    <property type="entry name" value="FLAP ENDONUCLEASE FAMILY MEMBER"/>
    <property type="match status" value="1"/>
</dbReference>
<dbReference type="Pfam" id="PF00867">
    <property type="entry name" value="XPG_I"/>
    <property type="match status" value="1"/>
</dbReference>
<dbReference type="Pfam" id="PF00752">
    <property type="entry name" value="XPG_N"/>
    <property type="match status" value="1"/>
</dbReference>
<dbReference type="PRINTS" id="PR00853">
    <property type="entry name" value="XPGRADSUPER"/>
</dbReference>
<dbReference type="SMART" id="SM00279">
    <property type="entry name" value="HhH2"/>
    <property type="match status" value="1"/>
</dbReference>
<dbReference type="SMART" id="SM00484">
    <property type="entry name" value="XPGI"/>
    <property type="match status" value="1"/>
</dbReference>
<dbReference type="SMART" id="SM00485">
    <property type="entry name" value="XPGN"/>
    <property type="match status" value="1"/>
</dbReference>
<dbReference type="SUPFAM" id="SSF47807">
    <property type="entry name" value="5' to 3' exonuclease, C-terminal subdomain"/>
    <property type="match status" value="1"/>
</dbReference>
<dbReference type="SUPFAM" id="SSF88723">
    <property type="entry name" value="PIN domain-like"/>
    <property type="match status" value="1"/>
</dbReference>
<dbReference type="PROSITE" id="PS00841">
    <property type="entry name" value="XPG_1"/>
    <property type="match status" value="1"/>
</dbReference>
<dbReference type="PROSITE" id="PS00842">
    <property type="entry name" value="XPG_2"/>
    <property type="match status" value="1"/>
</dbReference>